<reference key="1">
    <citation type="journal article" date="2000" name="DNA Res.">
        <title>Complete genome structure of the nitrogen-fixing symbiotic bacterium Mesorhizobium loti.</title>
        <authorList>
            <person name="Kaneko T."/>
            <person name="Nakamura Y."/>
            <person name="Sato S."/>
            <person name="Asamizu E."/>
            <person name="Kato T."/>
            <person name="Sasamoto S."/>
            <person name="Watanabe A."/>
            <person name="Idesawa K."/>
            <person name="Ishikawa A."/>
            <person name="Kawashima K."/>
            <person name="Kimura T."/>
            <person name="Kishida Y."/>
            <person name="Kiyokawa C."/>
            <person name="Kohara M."/>
            <person name="Matsumoto M."/>
            <person name="Matsuno A."/>
            <person name="Mochizuki Y."/>
            <person name="Nakayama S."/>
            <person name="Nakazaki N."/>
            <person name="Shimpo S."/>
            <person name="Sugimoto M."/>
            <person name="Takeuchi C."/>
            <person name="Yamada M."/>
            <person name="Tabata S."/>
        </authorList>
    </citation>
    <scope>NUCLEOTIDE SEQUENCE [LARGE SCALE GENOMIC DNA]</scope>
    <source>
        <strain>LMG 29417 / CECT 9101 / MAFF 303099</strain>
    </source>
</reference>
<sequence length="286" mass="29638">MATKLPTTDIRIGAELIRRRKGGVPLVCLTAYTYPVARLLDPHVDLLLVGDSVSMVLHGHATTLGASLGMMIAHGQAVMRGSARACVVVDMPAGSYEDSAAQAVASARRIVDETGCQAVKLEGGVDMAGQIAAIAAAGIPVMGHIGLLPQSVEKDGGYKIKGRTDETVAALMADARAVEKAGAFSVVIEGTIEAVAADITRRIAIPTIGIGASGDCDGQILVIDDMVGLTVDRVPKFVKEYADLRSVIANAAERYAAEVRDRTFPGPSHVFSGSKASSDLNGGDES</sequence>
<evidence type="ECO:0000255" key="1">
    <source>
        <dbReference type="HAMAP-Rule" id="MF_00156"/>
    </source>
</evidence>
<evidence type="ECO:0000256" key="2">
    <source>
        <dbReference type="SAM" id="MobiDB-lite"/>
    </source>
</evidence>
<feature type="chain" id="PRO_0000184880" description="3-methyl-2-oxobutanoate hydroxymethyltransferase">
    <location>
        <begin position="1"/>
        <end position="286"/>
    </location>
</feature>
<feature type="region of interest" description="Disordered" evidence="2">
    <location>
        <begin position="263"/>
        <end position="286"/>
    </location>
</feature>
<feature type="active site" description="Proton acceptor" evidence="1">
    <location>
        <position position="189"/>
    </location>
</feature>
<feature type="binding site" evidence="1">
    <location>
        <begin position="51"/>
        <end position="52"/>
    </location>
    <ligand>
        <name>3-methyl-2-oxobutanoate</name>
        <dbReference type="ChEBI" id="CHEBI:11851"/>
    </ligand>
</feature>
<feature type="binding site" evidence="1">
    <location>
        <position position="51"/>
    </location>
    <ligand>
        <name>Mg(2+)</name>
        <dbReference type="ChEBI" id="CHEBI:18420"/>
    </ligand>
</feature>
<feature type="binding site" evidence="1">
    <location>
        <position position="90"/>
    </location>
    <ligand>
        <name>3-methyl-2-oxobutanoate</name>
        <dbReference type="ChEBI" id="CHEBI:11851"/>
    </ligand>
</feature>
<feature type="binding site" evidence="1">
    <location>
        <position position="90"/>
    </location>
    <ligand>
        <name>Mg(2+)</name>
        <dbReference type="ChEBI" id="CHEBI:18420"/>
    </ligand>
</feature>
<feature type="binding site" evidence="1">
    <location>
        <position position="120"/>
    </location>
    <ligand>
        <name>3-methyl-2-oxobutanoate</name>
        <dbReference type="ChEBI" id="CHEBI:11851"/>
    </ligand>
</feature>
<feature type="binding site" evidence="1">
    <location>
        <position position="122"/>
    </location>
    <ligand>
        <name>Mg(2+)</name>
        <dbReference type="ChEBI" id="CHEBI:18420"/>
    </ligand>
</feature>
<name>PANB_RHILO</name>
<protein>
    <recommendedName>
        <fullName evidence="1">3-methyl-2-oxobutanoate hydroxymethyltransferase</fullName>
        <ecNumber evidence="1">2.1.2.11</ecNumber>
    </recommendedName>
    <alternativeName>
        <fullName evidence="1">Ketopantoate hydroxymethyltransferase</fullName>
        <shortName evidence="1">KPHMT</shortName>
    </alternativeName>
</protein>
<comment type="function">
    <text evidence="1">Catalyzes the reversible reaction in which hydroxymethyl group from 5,10-methylenetetrahydrofolate is transferred onto alpha-ketoisovalerate to form ketopantoate.</text>
</comment>
<comment type="catalytic activity">
    <reaction evidence="1">
        <text>3-methyl-2-oxobutanoate + (6R)-5,10-methylene-5,6,7,8-tetrahydrofolate + H2O = 2-dehydropantoate + (6S)-5,6,7,8-tetrahydrofolate</text>
        <dbReference type="Rhea" id="RHEA:11824"/>
        <dbReference type="ChEBI" id="CHEBI:11561"/>
        <dbReference type="ChEBI" id="CHEBI:11851"/>
        <dbReference type="ChEBI" id="CHEBI:15377"/>
        <dbReference type="ChEBI" id="CHEBI:15636"/>
        <dbReference type="ChEBI" id="CHEBI:57453"/>
        <dbReference type="EC" id="2.1.2.11"/>
    </reaction>
</comment>
<comment type="cofactor">
    <cofactor evidence="1">
        <name>Mg(2+)</name>
        <dbReference type="ChEBI" id="CHEBI:18420"/>
    </cofactor>
    <text evidence="1">Binds 1 Mg(2+) ion per subunit.</text>
</comment>
<comment type="pathway">
    <text evidence="1">Cofactor biosynthesis; (R)-pantothenate biosynthesis; (R)-pantoate from 3-methyl-2-oxobutanoate: step 1/2.</text>
</comment>
<comment type="subunit">
    <text evidence="1">Homodecamer; pentamer of dimers.</text>
</comment>
<comment type="subcellular location">
    <subcellularLocation>
        <location evidence="1">Cytoplasm</location>
    </subcellularLocation>
</comment>
<comment type="similarity">
    <text evidence="1">Belongs to the PanB family.</text>
</comment>
<accession>Q98NC9</accession>
<dbReference type="EC" id="2.1.2.11" evidence="1"/>
<dbReference type="EMBL" id="BA000012">
    <property type="protein sequence ID" value="BAB47832.1"/>
    <property type="molecule type" value="Genomic_DNA"/>
</dbReference>
<dbReference type="RefSeq" id="WP_010909202.1">
    <property type="nucleotide sequence ID" value="NC_002678.2"/>
</dbReference>
<dbReference type="SMR" id="Q98NC9"/>
<dbReference type="KEGG" id="mlo:mll0197"/>
<dbReference type="PATRIC" id="fig|266835.9.peg.153"/>
<dbReference type="eggNOG" id="COG0413">
    <property type="taxonomic scope" value="Bacteria"/>
</dbReference>
<dbReference type="HOGENOM" id="CLU_036645_1_0_5"/>
<dbReference type="UniPathway" id="UPA00028">
    <property type="reaction ID" value="UER00003"/>
</dbReference>
<dbReference type="Proteomes" id="UP000000552">
    <property type="component" value="Chromosome"/>
</dbReference>
<dbReference type="GO" id="GO:0005737">
    <property type="term" value="C:cytoplasm"/>
    <property type="evidence" value="ECO:0007669"/>
    <property type="project" value="UniProtKB-SubCell"/>
</dbReference>
<dbReference type="GO" id="GO:0003864">
    <property type="term" value="F:3-methyl-2-oxobutanoate hydroxymethyltransferase activity"/>
    <property type="evidence" value="ECO:0007669"/>
    <property type="project" value="UniProtKB-UniRule"/>
</dbReference>
<dbReference type="GO" id="GO:0000287">
    <property type="term" value="F:magnesium ion binding"/>
    <property type="evidence" value="ECO:0007669"/>
    <property type="project" value="TreeGrafter"/>
</dbReference>
<dbReference type="GO" id="GO:0015940">
    <property type="term" value="P:pantothenate biosynthetic process"/>
    <property type="evidence" value="ECO:0007669"/>
    <property type="project" value="UniProtKB-UniRule"/>
</dbReference>
<dbReference type="CDD" id="cd06557">
    <property type="entry name" value="KPHMT-like"/>
    <property type="match status" value="1"/>
</dbReference>
<dbReference type="FunFam" id="3.20.20.60:FF:000003">
    <property type="entry name" value="3-methyl-2-oxobutanoate hydroxymethyltransferase"/>
    <property type="match status" value="1"/>
</dbReference>
<dbReference type="Gene3D" id="3.20.20.60">
    <property type="entry name" value="Phosphoenolpyruvate-binding domains"/>
    <property type="match status" value="1"/>
</dbReference>
<dbReference type="HAMAP" id="MF_00156">
    <property type="entry name" value="PanB"/>
    <property type="match status" value="1"/>
</dbReference>
<dbReference type="InterPro" id="IPR003700">
    <property type="entry name" value="Pantoate_hydroxy_MeTrfase"/>
</dbReference>
<dbReference type="InterPro" id="IPR015813">
    <property type="entry name" value="Pyrv/PenolPyrv_kinase-like_dom"/>
</dbReference>
<dbReference type="InterPro" id="IPR040442">
    <property type="entry name" value="Pyrv_kinase-like_dom_sf"/>
</dbReference>
<dbReference type="NCBIfam" id="TIGR00222">
    <property type="entry name" value="panB"/>
    <property type="match status" value="1"/>
</dbReference>
<dbReference type="NCBIfam" id="NF001452">
    <property type="entry name" value="PRK00311.1"/>
    <property type="match status" value="1"/>
</dbReference>
<dbReference type="PANTHER" id="PTHR20881">
    <property type="entry name" value="3-METHYL-2-OXOBUTANOATE HYDROXYMETHYLTRANSFERASE"/>
    <property type="match status" value="1"/>
</dbReference>
<dbReference type="PANTHER" id="PTHR20881:SF0">
    <property type="entry name" value="3-METHYL-2-OXOBUTANOATE HYDROXYMETHYLTRANSFERASE"/>
    <property type="match status" value="1"/>
</dbReference>
<dbReference type="Pfam" id="PF02548">
    <property type="entry name" value="Pantoate_transf"/>
    <property type="match status" value="1"/>
</dbReference>
<dbReference type="PIRSF" id="PIRSF000388">
    <property type="entry name" value="Pantoate_hydroxy_MeTrfase"/>
    <property type="match status" value="1"/>
</dbReference>
<dbReference type="SUPFAM" id="SSF51621">
    <property type="entry name" value="Phosphoenolpyruvate/pyruvate domain"/>
    <property type="match status" value="1"/>
</dbReference>
<proteinExistence type="inferred from homology"/>
<organism>
    <name type="scientific">Mesorhizobium japonicum (strain LMG 29417 / CECT 9101 / MAFF 303099)</name>
    <name type="common">Mesorhizobium loti (strain MAFF 303099)</name>
    <dbReference type="NCBI Taxonomy" id="266835"/>
    <lineage>
        <taxon>Bacteria</taxon>
        <taxon>Pseudomonadati</taxon>
        <taxon>Pseudomonadota</taxon>
        <taxon>Alphaproteobacteria</taxon>
        <taxon>Hyphomicrobiales</taxon>
        <taxon>Phyllobacteriaceae</taxon>
        <taxon>Mesorhizobium</taxon>
    </lineage>
</organism>
<keyword id="KW-0963">Cytoplasm</keyword>
<keyword id="KW-0460">Magnesium</keyword>
<keyword id="KW-0479">Metal-binding</keyword>
<keyword id="KW-0566">Pantothenate biosynthesis</keyword>
<keyword id="KW-0808">Transferase</keyword>
<gene>
    <name evidence="1" type="primary">panB</name>
    <name type="ordered locus">mll0197</name>
</gene>